<dbReference type="EMBL" id="BA000004">
    <property type="protein sequence ID" value="BAB06146.1"/>
    <property type="molecule type" value="Genomic_DNA"/>
</dbReference>
<dbReference type="PIR" id="C83953">
    <property type="entry name" value="C83953"/>
</dbReference>
<dbReference type="RefSeq" id="WP_010898580.1">
    <property type="nucleotide sequence ID" value="NC_002570.2"/>
</dbReference>
<dbReference type="SMR" id="Q9KA63"/>
<dbReference type="STRING" id="272558.gene:10728325"/>
<dbReference type="KEGG" id="bha:BH2427"/>
<dbReference type="eggNOG" id="COG0052">
    <property type="taxonomic scope" value="Bacteria"/>
</dbReference>
<dbReference type="HOGENOM" id="CLU_040318_1_2_9"/>
<dbReference type="OrthoDB" id="9808036at2"/>
<dbReference type="Proteomes" id="UP000001258">
    <property type="component" value="Chromosome"/>
</dbReference>
<dbReference type="GO" id="GO:0022627">
    <property type="term" value="C:cytosolic small ribosomal subunit"/>
    <property type="evidence" value="ECO:0007669"/>
    <property type="project" value="TreeGrafter"/>
</dbReference>
<dbReference type="GO" id="GO:0003735">
    <property type="term" value="F:structural constituent of ribosome"/>
    <property type="evidence" value="ECO:0007669"/>
    <property type="project" value="InterPro"/>
</dbReference>
<dbReference type="GO" id="GO:0006412">
    <property type="term" value="P:translation"/>
    <property type="evidence" value="ECO:0007669"/>
    <property type="project" value="UniProtKB-UniRule"/>
</dbReference>
<dbReference type="CDD" id="cd01425">
    <property type="entry name" value="RPS2"/>
    <property type="match status" value="1"/>
</dbReference>
<dbReference type="FunFam" id="1.10.287.610:FF:000001">
    <property type="entry name" value="30S ribosomal protein S2"/>
    <property type="match status" value="1"/>
</dbReference>
<dbReference type="Gene3D" id="3.40.50.10490">
    <property type="entry name" value="Glucose-6-phosphate isomerase like protein, domain 1"/>
    <property type="match status" value="1"/>
</dbReference>
<dbReference type="Gene3D" id="1.10.287.610">
    <property type="entry name" value="Helix hairpin bin"/>
    <property type="match status" value="1"/>
</dbReference>
<dbReference type="HAMAP" id="MF_00291_B">
    <property type="entry name" value="Ribosomal_uS2_B"/>
    <property type="match status" value="1"/>
</dbReference>
<dbReference type="InterPro" id="IPR001865">
    <property type="entry name" value="Ribosomal_uS2"/>
</dbReference>
<dbReference type="InterPro" id="IPR005706">
    <property type="entry name" value="Ribosomal_uS2_bac/mit/plastid"/>
</dbReference>
<dbReference type="InterPro" id="IPR018130">
    <property type="entry name" value="Ribosomal_uS2_CS"/>
</dbReference>
<dbReference type="InterPro" id="IPR023591">
    <property type="entry name" value="Ribosomal_uS2_flav_dom_sf"/>
</dbReference>
<dbReference type="NCBIfam" id="TIGR01011">
    <property type="entry name" value="rpsB_bact"/>
    <property type="match status" value="1"/>
</dbReference>
<dbReference type="PANTHER" id="PTHR12534">
    <property type="entry name" value="30S RIBOSOMAL PROTEIN S2 PROKARYOTIC AND ORGANELLAR"/>
    <property type="match status" value="1"/>
</dbReference>
<dbReference type="PANTHER" id="PTHR12534:SF0">
    <property type="entry name" value="SMALL RIBOSOMAL SUBUNIT PROTEIN US2M"/>
    <property type="match status" value="1"/>
</dbReference>
<dbReference type="Pfam" id="PF00318">
    <property type="entry name" value="Ribosomal_S2"/>
    <property type="match status" value="1"/>
</dbReference>
<dbReference type="PRINTS" id="PR00395">
    <property type="entry name" value="RIBOSOMALS2"/>
</dbReference>
<dbReference type="SUPFAM" id="SSF52313">
    <property type="entry name" value="Ribosomal protein S2"/>
    <property type="match status" value="1"/>
</dbReference>
<dbReference type="PROSITE" id="PS00962">
    <property type="entry name" value="RIBOSOMAL_S2_1"/>
    <property type="match status" value="1"/>
</dbReference>
<dbReference type="PROSITE" id="PS00963">
    <property type="entry name" value="RIBOSOMAL_S2_2"/>
    <property type="match status" value="1"/>
</dbReference>
<organism>
    <name type="scientific">Halalkalibacterium halodurans (strain ATCC BAA-125 / DSM 18197 / FERM 7344 / JCM 9153 / C-125)</name>
    <name type="common">Bacillus halodurans</name>
    <dbReference type="NCBI Taxonomy" id="272558"/>
    <lineage>
        <taxon>Bacteria</taxon>
        <taxon>Bacillati</taxon>
        <taxon>Bacillota</taxon>
        <taxon>Bacilli</taxon>
        <taxon>Bacillales</taxon>
        <taxon>Bacillaceae</taxon>
        <taxon>Halalkalibacterium (ex Joshi et al. 2022)</taxon>
    </lineage>
</organism>
<name>RS2_HALH5</name>
<protein>
    <recommendedName>
        <fullName evidence="1">Small ribosomal subunit protein uS2</fullName>
    </recommendedName>
    <alternativeName>
        <fullName evidence="2">30S ribosomal protein S2</fullName>
    </alternativeName>
</protein>
<keyword id="KW-1185">Reference proteome</keyword>
<keyword id="KW-0687">Ribonucleoprotein</keyword>
<keyword id="KW-0689">Ribosomal protein</keyword>
<reference key="1">
    <citation type="journal article" date="2000" name="Nucleic Acids Res.">
        <title>Complete genome sequence of the alkaliphilic bacterium Bacillus halodurans and genomic sequence comparison with Bacillus subtilis.</title>
        <authorList>
            <person name="Takami H."/>
            <person name="Nakasone K."/>
            <person name="Takaki Y."/>
            <person name="Maeno G."/>
            <person name="Sasaki R."/>
            <person name="Masui N."/>
            <person name="Fuji F."/>
            <person name="Hirama C."/>
            <person name="Nakamura Y."/>
            <person name="Ogasawara N."/>
            <person name="Kuhara S."/>
            <person name="Horikoshi K."/>
        </authorList>
    </citation>
    <scope>NUCLEOTIDE SEQUENCE [LARGE SCALE GENOMIC DNA]</scope>
    <source>
        <strain>ATCC BAA-125 / DSM 18197 / FERM 7344 / JCM 9153 / C-125</strain>
    </source>
</reference>
<feature type="chain" id="PRO_0000134127" description="Small ribosomal subunit protein uS2">
    <location>
        <begin position="1"/>
        <end position="244"/>
    </location>
</feature>
<evidence type="ECO:0000255" key="1">
    <source>
        <dbReference type="HAMAP-Rule" id="MF_00291"/>
    </source>
</evidence>
<evidence type="ECO:0000305" key="2"/>
<sequence>MAVISMKQLLEAGVHFGHQTRRWNPKMDRYIFTERNGIYIIDLQKTVKKVEEAYNFVRELAADGGKVLFVGTKKQAQDSVKEEAERCGMYYINQRWLGGTLTNFETIQKRIDRLKKLEKMEEDGTFDVLPKKEVILLKKEMERLEKFLGGIKDMNSLPDALFVIDPRKERIAIAEAHKLNIPIVAIVDTNCDPDEIDYVIPGNDDAIRAVKLLTGKMADAVVEATSGAGEEAEEVAEVTEETTA</sequence>
<comment type="similarity">
    <text evidence="1">Belongs to the universal ribosomal protein uS2 family.</text>
</comment>
<gene>
    <name evidence="1" type="primary">rpsB</name>
    <name type="ordered locus">BH2427</name>
</gene>
<proteinExistence type="inferred from homology"/>
<accession>Q9KA63</accession>